<accession>B7KI38</accession>
<sequence length="226" mass="26182">MDKVRTVSDSKRDFYTKHTRPINSVYRRVVEELMVEMHLLSVNSDFQYDPVYALGVVTSFQRFMQGYRPDADKESIFNALCQSVGGDPQQYRQDAERMIESAKQLSAQQLLFNLESASDSSSGENQILQTLIGIANAPKYKYTRLFAIGIYTILAETDPEMLKNTEKREEVVKQIAKVLHLPEEKMQKDLDLYRSNLEKMDQLLTVIEEALQADRKKREQQKIMDN</sequence>
<reference key="1">
    <citation type="journal article" date="2011" name="MBio">
        <title>Novel metabolic attributes of the genus Cyanothece, comprising a group of unicellular nitrogen-fixing Cyanobacteria.</title>
        <authorList>
            <person name="Bandyopadhyay A."/>
            <person name="Elvitigala T."/>
            <person name="Welsh E."/>
            <person name="Stockel J."/>
            <person name="Liberton M."/>
            <person name="Min H."/>
            <person name="Sherman L.A."/>
            <person name="Pakrasi H.B."/>
        </authorList>
    </citation>
    <scope>NUCLEOTIDE SEQUENCE [LARGE SCALE GENOMIC DNA]</scope>
    <source>
        <strain>PCC 7424</strain>
    </source>
</reference>
<keyword id="KW-0175">Coiled coil</keyword>
<keyword id="KW-1185">Reference proteome</keyword>
<organism>
    <name type="scientific">Gloeothece citriformis (strain PCC 7424)</name>
    <name type="common">Cyanothece sp. (strain PCC 7424)</name>
    <dbReference type="NCBI Taxonomy" id="65393"/>
    <lineage>
        <taxon>Bacteria</taxon>
        <taxon>Bacillati</taxon>
        <taxon>Cyanobacteriota</taxon>
        <taxon>Cyanophyceae</taxon>
        <taxon>Oscillatoriophycideae</taxon>
        <taxon>Chroococcales</taxon>
        <taxon>Aphanothecaceae</taxon>
        <taxon>Gloeothece</taxon>
        <taxon>Gloeothece citriformis</taxon>
    </lineage>
</organism>
<dbReference type="EMBL" id="CP001291">
    <property type="protein sequence ID" value="ACK73525.1"/>
    <property type="molecule type" value="Genomic_DNA"/>
</dbReference>
<dbReference type="RefSeq" id="WP_015957104.1">
    <property type="nucleotide sequence ID" value="NC_011729.1"/>
</dbReference>
<dbReference type="SMR" id="B7KI38"/>
<dbReference type="STRING" id="65393.PCC7424_5175"/>
<dbReference type="KEGG" id="cyc:PCC7424_5175"/>
<dbReference type="eggNOG" id="ENOG502Z86M">
    <property type="taxonomic scope" value="Bacteria"/>
</dbReference>
<dbReference type="HOGENOM" id="CLU_079763_1_0_3"/>
<dbReference type="OrthoDB" id="463078at2"/>
<dbReference type="Proteomes" id="UP000002384">
    <property type="component" value="Chromosome"/>
</dbReference>
<dbReference type="GO" id="GO:0030096">
    <property type="term" value="C:plasma membrane-derived thylakoid photosystem II"/>
    <property type="evidence" value="ECO:0007669"/>
    <property type="project" value="TreeGrafter"/>
</dbReference>
<dbReference type="GO" id="GO:0010207">
    <property type="term" value="P:photosystem II assembly"/>
    <property type="evidence" value="ECO:0007669"/>
    <property type="project" value="InterPro"/>
</dbReference>
<dbReference type="HAMAP" id="MF_01843">
    <property type="entry name" value="Thf1"/>
    <property type="match status" value="1"/>
</dbReference>
<dbReference type="InterPro" id="IPR017499">
    <property type="entry name" value="Thf1"/>
</dbReference>
<dbReference type="NCBIfam" id="TIGR03060">
    <property type="entry name" value="PS_II_psb29"/>
    <property type="match status" value="1"/>
</dbReference>
<dbReference type="PANTHER" id="PTHR34793">
    <property type="entry name" value="PROTEIN THYLAKOID FORMATION 1, CHLOROPLASTIC"/>
    <property type="match status" value="1"/>
</dbReference>
<dbReference type="PANTHER" id="PTHR34793:SF1">
    <property type="entry name" value="PROTEIN THYLAKOID FORMATION 1, CHLOROPLASTIC"/>
    <property type="match status" value="1"/>
</dbReference>
<dbReference type="Pfam" id="PF11264">
    <property type="entry name" value="ThylakoidFormat"/>
    <property type="match status" value="1"/>
</dbReference>
<evidence type="ECO:0000255" key="1">
    <source>
        <dbReference type="HAMAP-Rule" id="MF_01843"/>
    </source>
</evidence>
<feature type="chain" id="PRO_1000188425" description="Protein Thf1">
    <location>
        <begin position="1"/>
        <end position="226"/>
    </location>
</feature>
<feature type="coiled-coil region" evidence="1">
    <location>
        <begin position="183"/>
        <end position="213"/>
    </location>
</feature>
<name>THF1_GLOC7</name>
<protein>
    <recommendedName>
        <fullName evidence="1">Protein Thf1</fullName>
    </recommendedName>
</protein>
<comment type="function">
    <text evidence="1">May be involved in photosynthetic membrane biogenesis.</text>
</comment>
<comment type="similarity">
    <text evidence="1">Belongs to the THF1 family.</text>
</comment>
<proteinExistence type="inferred from homology"/>
<gene>
    <name evidence="1" type="primary">thf1</name>
    <name type="ordered locus">PCC7424_5175</name>
</gene>